<accession>Q9PDB9</accession>
<keyword id="KW-0067">ATP-binding</keyword>
<keyword id="KW-0418">Kinase</keyword>
<keyword id="KW-0547">Nucleotide-binding</keyword>
<keyword id="KW-0808">Transferase</keyword>
<evidence type="ECO:0000255" key="1"/>
<evidence type="ECO:0000305" key="2"/>
<gene>
    <name type="ordered locus">XF_1460</name>
</gene>
<proteinExistence type="inferred from homology"/>
<dbReference type="EMBL" id="AE003849">
    <property type="protein sequence ID" value="AAF84269.1"/>
    <property type="status" value="ALT_INIT"/>
    <property type="molecule type" value="Genomic_DNA"/>
</dbReference>
<dbReference type="PIR" id="A82678">
    <property type="entry name" value="A82678"/>
</dbReference>
<dbReference type="RefSeq" id="WP_031336775.1">
    <property type="nucleotide sequence ID" value="NC_002488.3"/>
</dbReference>
<dbReference type="SMR" id="Q9PDB9"/>
<dbReference type="STRING" id="160492.XF_1460"/>
<dbReference type="KEGG" id="xfa:XF_1460"/>
<dbReference type="PATRIC" id="fig|160492.11.peg.1541"/>
<dbReference type="eggNOG" id="COG0837">
    <property type="taxonomic scope" value="Bacteria"/>
</dbReference>
<dbReference type="HOGENOM" id="CLU_042582_1_0_6"/>
<dbReference type="Proteomes" id="UP000000812">
    <property type="component" value="Chromosome"/>
</dbReference>
<dbReference type="GO" id="GO:0005829">
    <property type="term" value="C:cytosol"/>
    <property type="evidence" value="ECO:0007669"/>
    <property type="project" value="TreeGrafter"/>
</dbReference>
<dbReference type="GO" id="GO:0005524">
    <property type="term" value="F:ATP binding"/>
    <property type="evidence" value="ECO:0007669"/>
    <property type="project" value="UniProtKB-KW"/>
</dbReference>
<dbReference type="GO" id="GO:0005536">
    <property type="term" value="F:D-glucose binding"/>
    <property type="evidence" value="ECO:0007669"/>
    <property type="project" value="InterPro"/>
</dbReference>
<dbReference type="GO" id="GO:0004340">
    <property type="term" value="F:glucokinase activity"/>
    <property type="evidence" value="ECO:0007669"/>
    <property type="project" value="InterPro"/>
</dbReference>
<dbReference type="GO" id="GO:0006096">
    <property type="term" value="P:glycolytic process"/>
    <property type="evidence" value="ECO:0007669"/>
    <property type="project" value="InterPro"/>
</dbReference>
<dbReference type="CDD" id="cd24008">
    <property type="entry name" value="ASKHA_NBD_GLK"/>
    <property type="match status" value="1"/>
</dbReference>
<dbReference type="Gene3D" id="3.30.420.40">
    <property type="match status" value="1"/>
</dbReference>
<dbReference type="Gene3D" id="3.40.367.20">
    <property type="match status" value="1"/>
</dbReference>
<dbReference type="InterPro" id="IPR043129">
    <property type="entry name" value="ATPase_NBD"/>
</dbReference>
<dbReference type="InterPro" id="IPR050201">
    <property type="entry name" value="Bacterial_glucokinase"/>
</dbReference>
<dbReference type="InterPro" id="IPR003836">
    <property type="entry name" value="Glucokinase"/>
</dbReference>
<dbReference type="NCBIfam" id="NF009073">
    <property type="entry name" value="PRK12408.1"/>
    <property type="match status" value="1"/>
</dbReference>
<dbReference type="PANTHER" id="PTHR47690">
    <property type="entry name" value="GLUCOKINASE"/>
    <property type="match status" value="1"/>
</dbReference>
<dbReference type="PANTHER" id="PTHR47690:SF1">
    <property type="entry name" value="GLUCOKINASE"/>
    <property type="match status" value="1"/>
</dbReference>
<dbReference type="Pfam" id="PF02685">
    <property type="entry name" value="Glucokinase"/>
    <property type="match status" value="1"/>
</dbReference>
<dbReference type="SUPFAM" id="SSF53067">
    <property type="entry name" value="Actin-like ATPase domain"/>
    <property type="match status" value="1"/>
</dbReference>
<name>Y1460_XYLFA</name>
<comment type="similarity">
    <text evidence="2">Belongs to the bacterial glucokinase family.</text>
</comment>
<comment type="sequence caution" evidence="2">
    <conflict type="erroneous initiation">
        <sequence resource="EMBL-CDS" id="AAF84269"/>
    </conflict>
</comment>
<reference key="1">
    <citation type="journal article" date="2000" name="Nature">
        <title>The genome sequence of the plant pathogen Xylella fastidiosa.</title>
        <authorList>
            <person name="Simpson A.J.G."/>
            <person name="Reinach F.C."/>
            <person name="Arruda P."/>
            <person name="Abreu F.A."/>
            <person name="Acencio M."/>
            <person name="Alvarenga R."/>
            <person name="Alves L.M.C."/>
            <person name="Araya J.E."/>
            <person name="Baia G.S."/>
            <person name="Baptista C.S."/>
            <person name="Barros M.H."/>
            <person name="Bonaccorsi E.D."/>
            <person name="Bordin S."/>
            <person name="Bove J.M."/>
            <person name="Briones M.R.S."/>
            <person name="Bueno M.R.P."/>
            <person name="Camargo A.A."/>
            <person name="Camargo L.E.A."/>
            <person name="Carraro D.M."/>
            <person name="Carrer H."/>
            <person name="Colauto N.B."/>
            <person name="Colombo C."/>
            <person name="Costa F.F."/>
            <person name="Costa M.C.R."/>
            <person name="Costa-Neto C.M."/>
            <person name="Coutinho L.L."/>
            <person name="Cristofani M."/>
            <person name="Dias-Neto E."/>
            <person name="Docena C."/>
            <person name="El-Dorry H."/>
            <person name="Facincani A.P."/>
            <person name="Ferreira A.J.S."/>
            <person name="Ferreira V.C.A."/>
            <person name="Ferro J.A."/>
            <person name="Fraga J.S."/>
            <person name="Franca S.C."/>
            <person name="Franco M.C."/>
            <person name="Frohme M."/>
            <person name="Furlan L.R."/>
            <person name="Garnier M."/>
            <person name="Goldman G.H."/>
            <person name="Goldman M.H.S."/>
            <person name="Gomes S.L."/>
            <person name="Gruber A."/>
            <person name="Ho P.L."/>
            <person name="Hoheisel J.D."/>
            <person name="Junqueira M.L."/>
            <person name="Kemper E.L."/>
            <person name="Kitajima J.P."/>
            <person name="Krieger J.E."/>
            <person name="Kuramae E.E."/>
            <person name="Laigret F."/>
            <person name="Lambais M.R."/>
            <person name="Leite L.C.C."/>
            <person name="Lemos E.G.M."/>
            <person name="Lemos M.V.F."/>
            <person name="Lopes S.A."/>
            <person name="Lopes C.R."/>
            <person name="Machado J.A."/>
            <person name="Machado M.A."/>
            <person name="Madeira A.M.B.N."/>
            <person name="Madeira H.M.F."/>
            <person name="Marino C.L."/>
            <person name="Marques M.V."/>
            <person name="Martins E.A.L."/>
            <person name="Martins E.M.F."/>
            <person name="Matsukuma A.Y."/>
            <person name="Menck C.F.M."/>
            <person name="Miracca E.C."/>
            <person name="Miyaki C.Y."/>
            <person name="Monteiro-Vitorello C.B."/>
            <person name="Moon D.H."/>
            <person name="Nagai M.A."/>
            <person name="Nascimento A.L.T.O."/>
            <person name="Netto L.E.S."/>
            <person name="Nhani A. Jr."/>
            <person name="Nobrega F.G."/>
            <person name="Nunes L.R."/>
            <person name="Oliveira M.A."/>
            <person name="de Oliveira M.C."/>
            <person name="de Oliveira R.C."/>
            <person name="Palmieri D.A."/>
            <person name="Paris A."/>
            <person name="Peixoto B.R."/>
            <person name="Pereira G.A.G."/>
            <person name="Pereira H.A. Jr."/>
            <person name="Pesquero J.B."/>
            <person name="Quaggio R.B."/>
            <person name="Roberto P.G."/>
            <person name="Rodrigues V."/>
            <person name="de Rosa A.J.M."/>
            <person name="de Rosa V.E. Jr."/>
            <person name="de Sa R.G."/>
            <person name="Santelli R.V."/>
            <person name="Sawasaki H.E."/>
            <person name="da Silva A.C.R."/>
            <person name="da Silva A.M."/>
            <person name="da Silva F.R."/>
            <person name="Silva W.A. Jr."/>
            <person name="da Silveira J.F."/>
            <person name="Silvestri M.L.Z."/>
            <person name="Siqueira W.J."/>
            <person name="de Souza A.A."/>
            <person name="de Souza A.P."/>
            <person name="Terenzi M.F."/>
            <person name="Truffi D."/>
            <person name="Tsai S.M."/>
            <person name="Tsuhako M.H."/>
            <person name="Vallada H."/>
            <person name="Van Sluys M.A."/>
            <person name="Verjovski-Almeida S."/>
            <person name="Vettore A.L."/>
            <person name="Zago M.A."/>
            <person name="Zatz M."/>
            <person name="Meidanis J."/>
            <person name="Setubal J.C."/>
        </authorList>
    </citation>
    <scope>NUCLEOTIDE SEQUENCE [LARGE SCALE GENOMIC DNA]</scope>
    <source>
        <strain>9a5c</strain>
    </source>
</reference>
<protein>
    <recommendedName>
        <fullName>Glucokinase-like protein XF_1460</fullName>
    </recommendedName>
</protein>
<sequence>MIPNPTRDAPNIPSFVAADVGGTHVRVSVVAAAPTCASPPQLLDVRTYRCADYPSLSTILNDFLGTRSAVRDCVIASAGFQRSDGTVITTNLPWPLSPHRLRADLDLAEVSLVNDFEALAYATEDMEAAQLLHLTGPAKAQDGPRLLLGPGTGLGAALWIPNNGRPIVLPTEAGQAALPSTTELEMQLVRHMLNNRTHVPIEHALSGPGILNVYRALCALQSVLPQHASPDAISHAAAAGTDMLSSQTLEVFCDFLGSIVGDLVMMYGAQGGVYLAGGILPQLREPLLRSHFVERFLNKGPMGEALQHVPVRLIEHGQLGIVGAARWYLNKKAT</sequence>
<feature type="chain" id="PRO_0000215149" description="Glucokinase-like protein XF_1460">
    <location>
        <begin position="1"/>
        <end position="334"/>
    </location>
</feature>
<feature type="binding site" evidence="1">
    <location>
        <begin position="18"/>
        <end position="23"/>
    </location>
    <ligand>
        <name>ATP</name>
        <dbReference type="ChEBI" id="CHEBI:30616"/>
    </ligand>
</feature>
<organism>
    <name type="scientific">Xylella fastidiosa (strain 9a5c)</name>
    <dbReference type="NCBI Taxonomy" id="160492"/>
    <lineage>
        <taxon>Bacteria</taxon>
        <taxon>Pseudomonadati</taxon>
        <taxon>Pseudomonadota</taxon>
        <taxon>Gammaproteobacteria</taxon>
        <taxon>Lysobacterales</taxon>
        <taxon>Lysobacteraceae</taxon>
        <taxon>Xylella</taxon>
    </lineage>
</organism>